<reference key="1">
    <citation type="journal article" date="2002" name="Proc. Natl. Acad. Sci. U.S.A.">
        <title>Genome sequence of the hyperthermophilic crenarchaeon Pyrobaculum aerophilum.</title>
        <authorList>
            <person name="Fitz-Gibbon S.T."/>
            <person name="Ladner H."/>
            <person name="Kim U.-J."/>
            <person name="Stetter K.O."/>
            <person name="Simon M.I."/>
            <person name="Miller J.H."/>
        </authorList>
    </citation>
    <scope>NUCLEOTIDE SEQUENCE [LARGE SCALE GENOMIC DNA]</scope>
    <source>
        <strain>ATCC 51768 / DSM 7523 / JCM 9630 / CIP 104966 / NBRC 100827 / IM2</strain>
    </source>
</reference>
<dbReference type="EC" id="6.3.1.5" evidence="1"/>
<dbReference type="EMBL" id="AE009441">
    <property type="protein sequence ID" value="AAL63333.1"/>
    <property type="molecule type" value="Genomic_DNA"/>
</dbReference>
<dbReference type="RefSeq" id="WP_011007805.1">
    <property type="nucleotide sequence ID" value="NC_003364.1"/>
</dbReference>
<dbReference type="SMR" id="Q8ZXL4"/>
<dbReference type="FunCoup" id="Q8ZXL4">
    <property type="interactions" value="72"/>
</dbReference>
<dbReference type="STRING" id="178306.PAE1219"/>
<dbReference type="EnsemblBacteria" id="AAL63333">
    <property type="protein sequence ID" value="AAL63333"/>
    <property type="gene ID" value="PAE1219"/>
</dbReference>
<dbReference type="GeneID" id="1465571"/>
<dbReference type="KEGG" id="pai:PAE1219"/>
<dbReference type="PATRIC" id="fig|178306.9.peg.902"/>
<dbReference type="eggNOG" id="arCOG00069">
    <property type="taxonomic scope" value="Archaea"/>
</dbReference>
<dbReference type="HOGENOM" id="CLU_059327_1_1_2"/>
<dbReference type="InParanoid" id="Q8ZXL4"/>
<dbReference type="UniPathway" id="UPA00253">
    <property type="reaction ID" value="UER00333"/>
</dbReference>
<dbReference type="Proteomes" id="UP000002439">
    <property type="component" value="Chromosome"/>
</dbReference>
<dbReference type="GO" id="GO:0005737">
    <property type="term" value="C:cytoplasm"/>
    <property type="evidence" value="ECO:0000318"/>
    <property type="project" value="GO_Central"/>
</dbReference>
<dbReference type="GO" id="GO:0005524">
    <property type="term" value="F:ATP binding"/>
    <property type="evidence" value="ECO:0007669"/>
    <property type="project" value="UniProtKB-UniRule"/>
</dbReference>
<dbReference type="GO" id="GO:0004359">
    <property type="term" value="F:glutaminase activity"/>
    <property type="evidence" value="ECO:0007669"/>
    <property type="project" value="InterPro"/>
</dbReference>
<dbReference type="GO" id="GO:0046872">
    <property type="term" value="F:metal ion binding"/>
    <property type="evidence" value="ECO:0007669"/>
    <property type="project" value="UniProtKB-KW"/>
</dbReference>
<dbReference type="GO" id="GO:0003952">
    <property type="term" value="F:NAD+ synthase (glutamine-hydrolyzing) activity"/>
    <property type="evidence" value="ECO:0007669"/>
    <property type="project" value="InterPro"/>
</dbReference>
<dbReference type="GO" id="GO:0008795">
    <property type="term" value="F:NAD+ synthase activity"/>
    <property type="evidence" value="ECO:0007669"/>
    <property type="project" value="UniProtKB-UniRule"/>
</dbReference>
<dbReference type="GO" id="GO:0009435">
    <property type="term" value="P:NAD biosynthetic process"/>
    <property type="evidence" value="ECO:0000318"/>
    <property type="project" value="GO_Central"/>
</dbReference>
<dbReference type="CDD" id="cd00553">
    <property type="entry name" value="NAD_synthase"/>
    <property type="match status" value="1"/>
</dbReference>
<dbReference type="FunFam" id="3.40.50.620:FF:000106">
    <property type="entry name" value="Glutamine-dependent NAD(+) synthetase"/>
    <property type="match status" value="1"/>
</dbReference>
<dbReference type="Gene3D" id="3.40.50.620">
    <property type="entry name" value="HUPs"/>
    <property type="match status" value="1"/>
</dbReference>
<dbReference type="HAMAP" id="MF_00193">
    <property type="entry name" value="NadE_ammonia_dep"/>
    <property type="match status" value="1"/>
</dbReference>
<dbReference type="InterPro" id="IPR022310">
    <property type="entry name" value="NAD/GMP_synthase"/>
</dbReference>
<dbReference type="InterPro" id="IPR003694">
    <property type="entry name" value="NAD_synthase"/>
</dbReference>
<dbReference type="InterPro" id="IPR022926">
    <property type="entry name" value="NH(3)-dep_NAD(+)_synth"/>
</dbReference>
<dbReference type="InterPro" id="IPR014729">
    <property type="entry name" value="Rossmann-like_a/b/a_fold"/>
</dbReference>
<dbReference type="NCBIfam" id="TIGR00552">
    <property type="entry name" value="nadE"/>
    <property type="match status" value="1"/>
</dbReference>
<dbReference type="NCBIfam" id="NF010587">
    <property type="entry name" value="PRK13980.1"/>
    <property type="match status" value="1"/>
</dbReference>
<dbReference type="PANTHER" id="PTHR23090:SF9">
    <property type="entry name" value="GLUTAMINE-DEPENDENT NAD(+) SYNTHETASE"/>
    <property type="match status" value="1"/>
</dbReference>
<dbReference type="PANTHER" id="PTHR23090">
    <property type="entry name" value="NH 3 /GLUTAMINE-DEPENDENT NAD + SYNTHETASE"/>
    <property type="match status" value="1"/>
</dbReference>
<dbReference type="Pfam" id="PF02540">
    <property type="entry name" value="NAD_synthase"/>
    <property type="match status" value="1"/>
</dbReference>
<dbReference type="SUPFAM" id="SSF52402">
    <property type="entry name" value="Adenine nucleotide alpha hydrolases-like"/>
    <property type="match status" value="1"/>
</dbReference>
<comment type="function">
    <text evidence="1">Catalyzes the ATP-dependent amidation of deamido-NAD to form NAD. Uses ammonia as a nitrogen source.</text>
</comment>
<comment type="catalytic activity">
    <reaction evidence="1">
        <text>deamido-NAD(+) + NH4(+) + ATP = AMP + diphosphate + NAD(+) + H(+)</text>
        <dbReference type="Rhea" id="RHEA:21188"/>
        <dbReference type="ChEBI" id="CHEBI:15378"/>
        <dbReference type="ChEBI" id="CHEBI:28938"/>
        <dbReference type="ChEBI" id="CHEBI:30616"/>
        <dbReference type="ChEBI" id="CHEBI:33019"/>
        <dbReference type="ChEBI" id="CHEBI:57540"/>
        <dbReference type="ChEBI" id="CHEBI:58437"/>
        <dbReference type="ChEBI" id="CHEBI:456215"/>
        <dbReference type="EC" id="6.3.1.5"/>
    </reaction>
</comment>
<comment type="pathway">
    <text evidence="1">Cofactor biosynthesis; NAD(+) biosynthesis; NAD(+) from deamido-NAD(+) (ammonia route): step 1/1.</text>
</comment>
<comment type="subunit">
    <text evidence="1">Homodimer.</text>
</comment>
<comment type="similarity">
    <text evidence="1">Belongs to the NAD synthetase family.</text>
</comment>
<protein>
    <recommendedName>
        <fullName evidence="1">NH(3)-dependent NAD(+) synthetase</fullName>
        <ecNumber evidence="1">6.3.1.5</ecNumber>
    </recommendedName>
</protein>
<proteinExistence type="inferred from homology"/>
<feature type="chain" id="PRO_0000152230" description="NH(3)-dependent NAD(+) synthetase">
    <location>
        <begin position="1"/>
        <end position="267"/>
    </location>
</feature>
<feature type="binding site" evidence="1">
    <location>
        <begin position="38"/>
        <end position="45"/>
    </location>
    <ligand>
        <name>ATP</name>
        <dbReference type="ChEBI" id="CHEBI:30616"/>
    </ligand>
</feature>
<feature type="binding site" evidence="1">
    <location>
        <position position="44"/>
    </location>
    <ligand>
        <name>Mg(2+)</name>
        <dbReference type="ChEBI" id="CHEBI:18420"/>
    </ligand>
</feature>
<feature type="binding site" evidence="1">
    <location>
        <position position="123"/>
    </location>
    <ligand>
        <name>deamido-NAD(+)</name>
        <dbReference type="ChEBI" id="CHEBI:58437"/>
    </ligand>
</feature>
<feature type="binding site" evidence="1">
    <location>
        <position position="143"/>
    </location>
    <ligand>
        <name>ATP</name>
        <dbReference type="ChEBI" id="CHEBI:30616"/>
    </ligand>
</feature>
<feature type="binding site" evidence="1">
    <location>
        <position position="148"/>
    </location>
    <ligand>
        <name>Mg(2+)</name>
        <dbReference type="ChEBI" id="CHEBI:18420"/>
    </ligand>
</feature>
<feature type="binding site" evidence="1">
    <location>
        <position position="156"/>
    </location>
    <ligand>
        <name>deamido-NAD(+)</name>
        <dbReference type="ChEBI" id="CHEBI:58437"/>
    </ligand>
</feature>
<feature type="binding site" evidence="1">
    <location>
        <position position="163"/>
    </location>
    <ligand>
        <name>deamido-NAD(+)</name>
        <dbReference type="ChEBI" id="CHEBI:58437"/>
    </ligand>
</feature>
<feature type="binding site" evidence="1">
    <location>
        <position position="172"/>
    </location>
    <ligand>
        <name>ATP</name>
        <dbReference type="ChEBI" id="CHEBI:30616"/>
    </ligand>
</feature>
<feature type="binding site" evidence="1">
    <location>
        <position position="193"/>
    </location>
    <ligand>
        <name>ATP</name>
        <dbReference type="ChEBI" id="CHEBI:30616"/>
    </ligand>
</feature>
<feature type="binding site" evidence="1">
    <location>
        <begin position="250"/>
        <end position="251"/>
    </location>
    <ligand>
        <name>deamido-NAD(+)</name>
        <dbReference type="ChEBI" id="CHEBI:58437"/>
    </ligand>
</feature>
<accession>Q8ZXL4</accession>
<name>NADE_PYRAE</name>
<gene>
    <name evidence="1" type="primary">nadE</name>
    <name type="ordered locus">PAE1219</name>
</gene>
<organism>
    <name type="scientific">Pyrobaculum aerophilum (strain ATCC 51768 / DSM 7523 / JCM 9630 / CIP 104966 / NBRC 100827 / IM2)</name>
    <dbReference type="NCBI Taxonomy" id="178306"/>
    <lineage>
        <taxon>Archaea</taxon>
        <taxon>Thermoproteota</taxon>
        <taxon>Thermoprotei</taxon>
        <taxon>Thermoproteales</taxon>
        <taxon>Thermoproteaceae</taxon>
        <taxon>Pyrobaculum</taxon>
    </lineage>
</organism>
<sequence>MFVYDVVNALDYEKARSIITAFISQYVQRAGSRGVVVGISGGVDSTVAAALAVEALGRQRVLGLLMPSLYTPPEDLKDALDVINALGVEWKRVDITPIYDAFVKTLPDFSQENRVAAGNILPRIRMTVLYYYANKYNLLVMGTGDRSELLLGYFTKYGDGGVDFLPIGSLFKLQVRELAARLGFADIAKKPSSPRLWQGHTAEGELGASYEVIDQVLYAVFDLKKPPEEVRGFFGEVVDIVITRVKKNIHKLTPPAYPDITPARRNV</sequence>
<keyword id="KW-0067">ATP-binding</keyword>
<keyword id="KW-0436">Ligase</keyword>
<keyword id="KW-0460">Magnesium</keyword>
<keyword id="KW-0479">Metal-binding</keyword>
<keyword id="KW-0520">NAD</keyword>
<keyword id="KW-0547">Nucleotide-binding</keyword>
<keyword id="KW-1185">Reference proteome</keyword>
<evidence type="ECO:0000255" key="1">
    <source>
        <dbReference type="HAMAP-Rule" id="MF_00193"/>
    </source>
</evidence>